<feature type="chain" id="PRO_0000329391" description="Myb-like protein R">
    <location>
        <begin position="1"/>
        <end position="394"/>
    </location>
</feature>
<feature type="transmembrane region" description="Helical" evidence="1">
    <location>
        <begin position="11"/>
        <end position="31"/>
    </location>
</feature>
<feature type="transmembrane region" description="Helical" evidence="1">
    <location>
        <begin position="99"/>
        <end position="119"/>
    </location>
</feature>
<feature type="domain" description="Myb-like" evidence="2">
    <location>
        <begin position="325"/>
        <end position="377"/>
    </location>
</feature>
<reference key="1">
    <citation type="journal article" date="2005" name="Nature">
        <title>The genome of the social amoeba Dictyostelium discoideum.</title>
        <authorList>
            <person name="Eichinger L."/>
            <person name="Pachebat J.A."/>
            <person name="Gloeckner G."/>
            <person name="Rajandream M.A."/>
            <person name="Sucgang R."/>
            <person name="Berriman M."/>
            <person name="Song J."/>
            <person name="Olsen R."/>
            <person name="Szafranski K."/>
            <person name="Xu Q."/>
            <person name="Tunggal B."/>
            <person name="Kummerfeld S."/>
            <person name="Madera M."/>
            <person name="Konfortov B.A."/>
            <person name="Rivero F."/>
            <person name="Bankier A.T."/>
            <person name="Lehmann R."/>
            <person name="Hamlin N."/>
            <person name="Davies R."/>
            <person name="Gaudet P."/>
            <person name="Fey P."/>
            <person name="Pilcher K."/>
            <person name="Chen G."/>
            <person name="Saunders D."/>
            <person name="Sodergren E.J."/>
            <person name="Davis P."/>
            <person name="Kerhornou A."/>
            <person name="Nie X."/>
            <person name="Hall N."/>
            <person name="Anjard C."/>
            <person name="Hemphill L."/>
            <person name="Bason N."/>
            <person name="Farbrother P."/>
            <person name="Desany B."/>
            <person name="Just E."/>
            <person name="Morio T."/>
            <person name="Rost R."/>
            <person name="Churcher C.M."/>
            <person name="Cooper J."/>
            <person name="Haydock S."/>
            <person name="van Driessche N."/>
            <person name="Cronin A."/>
            <person name="Goodhead I."/>
            <person name="Muzny D.M."/>
            <person name="Mourier T."/>
            <person name="Pain A."/>
            <person name="Lu M."/>
            <person name="Harper D."/>
            <person name="Lindsay R."/>
            <person name="Hauser H."/>
            <person name="James K.D."/>
            <person name="Quiles M."/>
            <person name="Madan Babu M."/>
            <person name="Saito T."/>
            <person name="Buchrieser C."/>
            <person name="Wardroper A."/>
            <person name="Felder M."/>
            <person name="Thangavelu M."/>
            <person name="Johnson D."/>
            <person name="Knights A."/>
            <person name="Loulseged H."/>
            <person name="Mungall K.L."/>
            <person name="Oliver K."/>
            <person name="Price C."/>
            <person name="Quail M.A."/>
            <person name="Urushihara H."/>
            <person name="Hernandez J."/>
            <person name="Rabbinowitsch E."/>
            <person name="Steffen D."/>
            <person name="Sanders M."/>
            <person name="Ma J."/>
            <person name="Kohara Y."/>
            <person name="Sharp S."/>
            <person name="Simmonds M.N."/>
            <person name="Spiegler S."/>
            <person name="Tivey A."/>
            <person name="Sugano S."/>
            <person name="White B."/>
            <person name="Walker D."/>
            <person name="Woodward J.R."/>
            <person name="Winckler T."/>
            <person name="Tanaka Y."/>
            <person name="Shaulsky G."/>
            <person name="Schleicher M."/>
            <person name="Weinstock G.M."/>
            <person name="Rosenthal A."/>
            <person name="Cox E.C."/>
            <person name="Chisholm R.L."/>
            <person name="Gibbs R.A."/>
            <person name="Loomis W.F."/>
            <person name="Platzer M."/>
            <person name="Kay R.R."/>
            <person name="Williams J.G."/>
            <person name="Dear P.H."/>
            <person name="Noegel A.A."/>
            <person name="Barrell B.G."/>
            <person name="Kuspa A."/>
        </authorList>
    </citation>
    <scope>NUCLEOTIDE SEQUENCE [LARGE SCALE GENOMIC DNA]</scope>
    <source>
        <strain>AX4</strain>
    </source>
</reference>
<sequence length="394" mass="45258">MDEPSTDKILIGAQIITTVITLFTGVFEFIIAAKSKMKRMKSEQMFSVNQDGLIHIIKSLLPGRNIIFISNAPTSTTDPSFNSQTMKNFLKVIFRLLPFFIGAVFIHLNIIPFHHLIIFTENGKWYFDSIQEELIPIVKERLKQIMSSQPDVIFACGAVVRDIFYMYLEEGSIEMFEINGNLKVDINKFKKIYTTVSDKNISPQSNEILDLFEFDTTKSSYEDVIEEYSKFENDSLGSFENPDYSGFHLLSKRKWNNKEALIVGIGKSNNKTTVQIKGDLLDKGYFRTELAIDTYFDRNKVLINKMVKNFKSTQEIIKPSPVISGNWSLDEQKALMVEVSTLGNKSEINWFFISKQLFLKGISRNARECQRKHESIQYVGLSGNPKGKFKRTFD</sequence>
<dbReference type="EMBL" id="AAFI02000187">
    <property type="protein sequence ID" value="EAL61447.2"/>
    <property type="molecule type" value="Genomic_DNA"/>
</dbReference>
<dbReference type="RefSeq" id="XP_629825.2">
    <property type="nucleotide sequence ID" value="XM_629823.2"/>
</dbReference>
<dbReference type="PaxDb" id="44689-DDB0233437"/>
<dbReference type="EnsemblProtists" id="EAL61447">
    <property type="protein sequence ID" value="EAL61447"/>
    <property type="gene ID" value="DDB_G0292182"/>
</dbReference>
<dbReference type="GeneID" id="8628506"/>
<dbReference type="KEGG" id="ddi:DDB_G0292182"/>
<dbReference type="dictyBase" id="DDB_G0292182">
    <property type="gene designation" value="mybR"/>
</dbReference>
<dbReference type="VEuPathDB" id="AmoebaDB:DDB_G0292182"/>
<dbReference type="HOGENOM" id="CLU_701008_0_0_1"/>
<dbReference type="InParanoid" id="Q54DP7"/>
<dbReference type="PRO" id="PR:Q54DP7"/>
<dbReference type="Proteomes" id="UP000002195">
    <property type="component" value="Chromosome 6"/>
</dbReference>
<dbReference type="GO" id="GO:0016020">
    <property type="term" value="C:membrane"/>
    <property type="evidence" value="ECO:0007669"/>
    <property type="project" value="UniProtKB-SubCell"/>
</dbReference>
<dbReference type="InterPro" id="IPR009057">
    <property type="entry name" value="Homeodomain-like_sf"/>
</dbReference>
<dbReference type="InterPro" id="IPR001005">
    <property type="entry name" value="SANT/Myb"/>
</dbReference>
<dbReference type="SUPFAM" id="SSF46689">
    <property type="entry name" value="Homeodomain-like"/>
    <property type="match status" value="1"/>
</dbReference>
<dbReference type="PROSITE" id="PS50090">
    <property type="entry name" value="MYB_LIKE"/>
    <property type="match status" value="1"/>
</dbReference>
<accession>Q54DP7</accession>
<name>MYBR_DICDI</name>
<protein>
    <recommendedName>
        <fullName>Myb-like protein R</fullName>
    </recommendedName>
</protein>
<keyword id="KW-0472">Membrane</keyword>
<keyword id="KW-1185">Reference proteome</keyword>
<keyword id="KW-0812">Transmembrane</keyword>
<keyword id="KW-1133">Transmembrane helix</keyword>
<proteinExistence type="predicted"/>
<comment type="subcellular location">
    <subcellularLocation>
        <location evidence="3">Membrane</location>
        <topology evidence="3">Multi-pass membrane protein</topology>
    </subcellularLocation>
</comment>
<gene>
    <name type="primary">mybR</name>
    <name type="ORF">DDB_G0292182</name>
</gene>
<organism>
    <name type="scientific">Dictyostelium discoideum</name>
    <name type="common">Social amoeba</name>
    <dbReference type="NCBI Taxonomy" id="44689"/>
    <lineage>
        <taxon>Eukaryota</taxon>
        <taxon>Amoebozoa</taxon>
        <taxon>Evosea</taxon>
        <taxon>Eumycetozoa</taxon>
        <taxon>Dictyostelia</taxon>
        <taxon>Dictyosteliales</taxon>
        <taxon>Dictyosteliaceae</taxon>
        <taxon>Dictyostelium</taxon>
    </lineage>
</organism>
<evidence type="ECO:0000255" key="1"/>
<evidence type="ECO:0000255" key="2">
    <source>
        <dbReference type="PROSITE-ProRule" id="PRU00133"/>
    </source>
</evidence>
<evidence type="ECO:0000305" key="3"/>